<keyword id="KW-0202">Cytokine</keyword>
<keyword id="KW-0325">Glycoprotein</keyword>
<keyword id="KW-0391">Immunity</keyword>
<keyword id="KW-1185">Reference proteome</keyword>
<keyword id="KW-0964">Secreted</keyword>
<keyword id="KW-0732">Signal</keyword>
<sequence>MIFHTGTTKPTLVLLCCIGTWLATCSLSFGAPISKEDLRTTIDLLKQESQDLYNNYSIKQASGMSADESIQLPCFSLDREALTNISVIIAHLEKVKVLSENTVDTSWVIRWLTNISCFNPLNLNISVPGNTDESYDCKVFVLTVLKQFSNCMAELQAKDNTTC</sequence>
<comment type="function">
    <text evidence="2 3 4">Activates STAT3 and possibly STAT1 and STAT5 through the IL31 heterodimeric receptor composed of IL31RA and OSMR (PubMed:15184896). May function in skin immunity (PubMed:15184896). Enhances myeloid progenitor cell survival in vitro (PubMed:17379091). Induces RETNLA and serum amyloid A protein expression in macrophages (PubMed:25847241).</text>
</comment>
<comment type="subcellular location">
    <subcellularLocation>
        <location evidence="5">Secreted</location>
    </subcellularLocation>
</comment>
<comment type="miscellaneous">
    <text>Il31 transgenic mice develop dermatitis. A similar phenotype is caused by local delivery of Il31.</text>
</comment>
<protein>
    <recommendedName>
        <fullName>Interleukin-31</fullName>
        <shortName>IL-31</shortName>
    </recommendedName>
</protein>
<proteinExistence type="evidence at transcript level"/>
<evidence type="ECO:0000255" key="1"/>
<evidence type="ECO:0000269" key="2">
    <source>
    </source>
</evidence>
<evidence type="ECO:0000269" key="3">
    <source>
    </source>
</evidence>
<evidence type="ECO:0000269" key="4">
    <source>
    </source>
</evidence>
<evidence type="ECO:0000305" key="5"/>
<name>IL31_MOUSE</name>
<accession>Q6EAL8</accession>
<dbReference type="EMBL" id="AY509149">
    <property type="protein sequence ID" value="AAS82846.1"/>
    <property type="molecule type" value="mRNA"/>
</dbReference>
<dbReference type="EMBL" id="BC117082">
    <property type="protein sequence ID" value="AAI17083.1"/>
    <property type="molecule type" value="mRNA"/>
</dbReference>
<dbReference type="EMBL" id="BC117084">
    <property type="protein sequence ID" value="AAI17085.1"/>
    <property type="molecule type" value="mRNA"/>
</dbReference>
<dbReference type="CCDS" id="CCDS51645.1"/>
<dbReference type="RefSeq" id="NP_083870.1">
    <property type="nucleotide sequence ID" value="NM_029594.2"/>
</dbReference>
<dbReference type="RefSeq" id="XP_006530561.1">
    <property type="nucleotide sequence ID" value="XM_006530498.1"/>
</dbReference>
<dbReference type="SMR" id="Q6EAL8"/>
<dbReference type="FunCoup" id="Q6EAL8">
    <property type="interactions" value="540"/>
</dbReference>
<dbReference type="STRING" id="10090.ENSMUSP00000031389"/>
<dbReference type="GlyCosmos" id="Q6EAL8">
    <property type="glycosylation" value="3 sites, No reported glycans"/>
</dbReference>
<dbReference type="GlyGen" id="Q6EAL8">
    <property type="glycosylation" value="3 sites"/>
</dbReference>
<dbReference type="jPOST" id="Q6EAL8"/>
<dbReference type="PaxDb" id="10090-ENSMUSP00000031389"/>
<dbReference type="Antibodypedia" id="19131">
    <property type="antibodies" value="454 antibodies from 39 providers"/>
</dbReference>
<dbReference type="Ensembl" id="ENSMUST00000031389.12">
    <property type="protein sequence ID" value="ENSMUSP00000031389.8"/>
    <property type="gene ID" value="ENSMUSG00000029437.13"/>
</dbReference>
<dbReference type="GeneID" id="76399"/>
<dbReference type="KEGG" id="mmu:76399"/>
<dbReference type="UCSC" id="uc008zns.2">
    <property type="organism name" value="mouse"/>
</dbReference>
<dbReference type="AGR" id="MGI:1923649"/>
<dbReference type="CTD" id="386653"/>
<dbReference type="MGI" id="MGI:1923649">
    <property type="gene designation" value="Il31"/>
</dbReference>
<dbReference type="VEuPathDB" id="HostDB:ENSMUSG00000029437"/>
<dbReference type="eggNOG" id="ENOG502TF53">
    <property type="taxonomic scope" value="Eukaryota"/>
</dbReference>
<dbReference type="GeneTree" id="ENSGT00390000018074"/>
<dbReference type="HOGENOM" id="CLU_1424604_0_0_1"/>
<dbReference type="InParanoid" id="Q6EAL8"/>
<dbReference type="OMA" id="PYFRAIR"/>
<dbReference type="OrthoDB" id="67641at9989"/>
<dbReference type="PhylomeDB" id="Q6EAL8"/>
<dbReference type="TreeFam" id="TF339844"/>
<dbReference type="Reactome" id="R-MMU-6788467">
    <property type="pathway name" value="IL-6-type cytokine receptor ligand interactions"/>
</dbReference>
<dbReference type="BioGRID-ORCS" id="76399">
    <property type="hits" value="1 hit in 74 CRISPR screens"/>
</dbReference>
<dbReference type="PRO" id="PR:Q6EAL8"/>
<dbReference type="Proteomes" id="UP000000589">
    <property type="component" value="Chromosome 5"/>
</dbReference>
<dbReference type="RNAct" id="Q6EAL8">
    <property type="molecule type" value="protein"/>
</dbReference>
<dbReference type="Bgee" id="ENSMUSG00000029437">
    <property type="expression patterns" value="Expressed in spermatid and 19 other cell types or tissues"/>
</dbReference>
<dbReference type="ExpressionAtlas" id="Q6EAL8">
    <property type="expression patterns" value="baseline and differential"/>
</dbReference>
<dbReference type="GO" id="GO:0005615">
    <property type="term" value="C:extracellular space"/>
    <property type="evidence" value="ECO:0000314"/>
    <property type="project" value="MGI"/>
</dbReference>
<dbReference type="GO" id="GO:0005125">
    <property type="term" value="F:cytokine activity"/>
    <property type="evidence" value="ECO:0000314"/>
    <property type="project" value="MGI"/>
</dbReference>
<dbReference type="GO" id="GO:0005126">
    <property type="term" value="F:cytokine receptor binding"/>
    <property type="evidence" value="ECO:0000353"/>
    <property type="project" value="MGI"/>
</dbReference>
<dbReference type="GO" id="GO:0005147">
    <property type="term" value="F:oncostatin-M receptor binding"/>
    <property type="evidence" value="ECO:0000315"/>
    <property type="project" value="MGI"/>
</dbReference>
<dbReference type="GO" id="GO:0002376">
    <property type="term" value="P:immune system process"/>
    <property type="evidence" value="ECO:0007669"/>
    <property type="project" value="UniProtKB-KW"/>
</dbReference>
<dbReference type="InterPro" id="IPR027987">
    <property type="entry name" value="IL-31"/>
</dbReference>
<dbReference type="PANTHER" id="PTHR38652">
    <property type="entry name" value="INTERLEUKIN-31"/>
    <property type="match status" value="1"/>
</dbReference>
<dbReference type="PANTHER" id="PTHR38652:SF1">
    <property type="entry name" value="INTERLEUKIN-31"/>
    <property type="match status" value="1"/>
</dbReference>
<dbReference type="Pfam" id="PF15209">
    <property type="entry name" value="IL31"/>
    <property type="match status" value="1"/>
</dbReference>
<reference key="1">
    <citation type="journal article" date="2004" name="Nat. Immunol.">
        <title>Interleukin 31, a cytokine produced by activated T cells, induces dermatitis in mice.</title>
        <authorList>
            <person name="Dillon S.R."/>
            <person name="Sprecher C."/>
            <person name="Hammond A."/>
            <person name="Bilsborough J."/>
            <person name="Rosenfeld-Franklin M."/>
            <person name="Presnell S.R."/>
            <person name="Haugen H.S."/>
            <person name="Maurer M."/>
            <person name="Harder B."/>
            <person name="Johnston J."/>
            <person name="Bort S."/>
            <person name="Mudri S."/>
            <person name="Kuijper J.L."/>
            <person name="Bukowski T."/>
            <person name="Shea P."/>
            <person name="Dong D.L."/>
            <person name="Dasovich M."/>
            <person name="Grant F.J."/>
            <person name="Lockwood L."/>
            <person name="Levin S.D."/>
            <person name="LeCiel C."/>
            <person name="Waggie K."/>
            <person name="Day H."/>
            <person name="Topouzis S."/>
            <person name="Kramer J."/>
            <person name="Kuestner R."/>
            <person name="Chen Z."/>
            <person name="Foster D."/>
            <person name="Parrish-Novak J."/>
            <person name="Gross J.A."/>
        </authorList>
    </citation>
    <scope>NUCLEOTIDE SEQUENCE [MRNA]</scope>
    <scope>FUNCTION</scope>
    <scope>INDUCTION</scope>
    <source>
        <strain>BALB/cJ</strain>
        <tissue>Testis</tissue>
    </source>
</reference>
<reference key="2">
    <citation type="journal article" date="2004" name="Genome Res.">
        <title>The status, quality, and expansion of the NIH full-length cDNA project: the Mammalian Gene Collection (MGC).</title>
        <authorList>
            <consortium name="The MGC Project Team"/>
        </authorList>
    </citation>
    <scope>NUCLEOTIDE SEQUENCE [LARGE SCALE MRNA]</scope>
    <source>
        <tissue>Testis</tissue>
    </source>
</reference>
<reference key="3">
    <citation type="journal article" date="2007" name="Exp. Hematol.">
        <title>Regulation of myeloid progenitor cell proliferation/survival by IL-31 receptor and IL-31.</title>
        <authorList>
            <person name="Broxmeyer H.E."/>
            <person name="Li J."/>
            <person name="Hangoc G."/>
            <person name="Cooper S."/>
            <person name="Tao W."/>
            <person name="Mantel C."/>
            <person name="Graham-Evans B."/>
            <person name="Ghilardi N."/>
            <person name="de Sauvage F.J."/>
        </authorList>
    </citation>
    <scope>FUNCTION</scope>
</reference>
<reference key="4">
    <citation type="journal article" date="2015" name="J. Biol. Chem.">
        <title>Th2 Cytokines Augment IL-31/IL-31RA Interactions via STAT6-dependent IL-31RA Expression.</title>
        <authorList>
            <person name="Edukulla R."/>
            <person name="Singh B."/>
            <person name="Jegga A.G."/>
            <person name="Sontake V."/>
            <person name="Dillon S.R."/>
            <person name="Madala S.K."/>
        </authorList>
    </citation>
    <scope>FUNCTION</scope>
</reference>
<organism>
    <name type="scientific">Mus musculus</name>
    <name type="common">Mouse</name>
    <dbReference type="NCBI Taxonomy" id="10090"/>
    <lineage>
        <taxon>Eukaryota</taxon>
        <taxon>Metazoa</taxon>
        <taxon>Chordata</taxon>
        <taxon>Craniata</taxon>
        <taxon>Vertebrata</taxon>
        <taxon>Euteleostomi</taxon>
        <taxon>Mammalia</taxon>
        <taxon>Eutheria</taxon>
        <taxon>Euarchontoglires</taxon>
        <taxon>Glires</taxon>
        <taxon>Rodentia</taxon>
        <taxon>Myomorpha</taxon>
        <taxon>Muroidea</taxon>
        <taxon>Muridae</taxon>
        <taxon>Murinae</taxon>
        <taxon>Mus</taxon>
        <taxon>Mus</taxon>
    </lineage>
</organism>
<feature type="signal peptide" evidence="1">
    <location>
        <begin position="1"/>
        <end position="23"/>
    </location>
</feature>
<feature type="chain" id="PRO_0000274571" description="Interleukin-31">
    <location>
        <begin position="24"/>
        <end position="163"/>
    </location>
</feature>
<feature type="glycosylation site" description="N-linked (GlcNAc...) asparagine" evidence="1">
    <location>
        <position position="55"/>
    </location>
</feature>
<feature type="glycosylation site" description="N-linked (GlcNAc...) asparagine" evidence="1">
    <location>
        <position position="84"/>
    </location>
</feature>
<feature type="glycosylation site" description="N-linked (GlcNAc...) asparagine" evidence="1">
    <location>
        <position position="124"/>
    </location>
</feature>
<gene>
    <name type="primary">Il31</name>
</gene>